<protein>
    <recommendedName>
        <fullName>Bifunctional oligoribonuclease and PAP phosphatase NrnA</fullName>
        <ecNumber>3.1.-.-</ecNumber>
    </recommendedName>
    <alternativeName>
        <fullName>3'(2'),5'-bisphosphate nucleotidase</fullName>
        <ecNumber>3.1.3.7</ecNumber>
    </alternativeName>
    <alternativeName>
        <fullName>3'-phosphoadenosine 5'-phosphate phosphatase</fullName>
        <shortName>PAP phosphatase</shortName>
    </alternativeName>
    <alternativeName>
        <fullName>Mgp-operon protein 1</fullName>
        <shortName>Mgp1</shortName>
    </alternativeName>
    <alternativeName>
        <fullName>ORF-1 protein</fullName>
    </alternativeName>
    <alternativeName>
        <fullName>nanoRNase</fullName>
    </alternativeName>
</protein>
<accession>P75144</accession>
<accession>Q50340</accession>
<name>NRNA_MYCPN</name>
<proteinExistence type="evidence at protein level"/>
<gene>
    <name type="primary">nrnA</name>
    <name type="ordered locus">MPN_140</name>
    <name type="ORF">MP014</name>
</gene>
<keyword id="KW-0269">Exonuclease</keyword>
<keyword id="KW-0378">Hydrolase</keyword>
<keyword id="KW-0540">Nuclease</keyword>
<keyword id="KW-1185">Reference proteome</keyword>
<feature type="chain" id="PRO_0000096466" description="Bifunctional oligoribonuclease and PAP phosphatase NrnA">
    <location>
        <begin position="1"/>
        <end position="324"/>
    </location>
</feature>
<feature type="mutagenesis site" description="Loss of activity on 5-mers, 15% activity on 24-mers, no longer complements E.coli orn mutant." evidence="2">
    <original>DHH</original>
    <variation>AAA</variation>
    <location>
        <begin position="118"/>
        <end position="120"/>
    </location>
</feature>
<comment type="function">
    <text evidence="1 2">Bifunctional enzyme which has both oligoribonuclease and pAp-phosphatase activities. Degrades RNA and DNA oligonucleotides with a length of 5 nucleotides and shorter, with a preference for longer oligomers. Also degrades 11- and 24-mers, but less efficiently. Directionality is controversial; shown to degrade 5-mers and less in a 3' to 5' direction (PubMed:22114320), and 11-mers in a 5' to 3' direction (PubMed:21087930). Converts 3'(2')-phosphoadenosine 5'-phosphate (PAP) to AMP.</text>
</comment>
<comment type="catalytic activity">
    <reaction>
        <text>adenosine 3',5'-bisphosphate + H2O = AMP + phosphate</text>
        <dbReference type="Rhea" id="RHEA:10040"/>
        <dbReference type="ChEBI" id="CHEBI:15377"/>
        <dbReference type="ChEBI" id="CHEBI:43474"/>
        <dbReference type="ChEBI" id="CHEBI:58343"/>
        <dbReference type="ChEBI" id="CHEBI:456215"/>
        <dbReference type="EC" id="3.1.3.7"/>
    </reaction>
</comment>
<comment type="cofactor">
    <cofactor evidence="1 2">
        <name>Co(2+)</name>
        <dbReference type="ChEBI" id="CHEBI:48828"/>
    </cofactor>
    <cofactor evidence="1 2">
        <name>Mn(2+)</name>
        <dbReference type="ChEBI" id="CHEBI:29035"/>
    </cofactor>
    <cofactor evidence="1 2">
        <name>Mg(2+)</name>
        <dbReference type="ChEBI" id="CHEBI:18420"/>
    </cofactor>
    <text evidence="1 2">Divalent metal cations; Co(2+), Mn(2+) or Mg(2+).</text>
</comment>
<comment type="biophysicochemical properties">
    <kinetics>
        <KM evidence="1">0.75 uM for ssDNA 6-mers in the presence of Mg(2+)</KM>
        <KM evidence="1">1.5 uM for ssDNA 6-mers in the presence of Mn(2+)</KM>
        <KM evidence="1">0.32 uM for ssRNA 6-mers in the presence of Mg(2+)</KM>
        <KM evidence="1">0.96 uM for ssRNA 6-mers in the presence of Mn(2+)</KM>
        <KM evidence="1">3.5 uM for ssDNA 11-mers in the presence of Mn(2+)</KM>
        <KM evidence="1">2.9 uM for ssRNA 11-mers in the presence of Mn(2+)</KM>
        <KM evidence="1">32 uM for PAP in the presence of Mn(2+)</KM>
    </kinetics>
</comment>
<comment type="subunit">
    <text evidence="1">Monomer or homodimer.</text>
</comment>
<comment type="miscellaneous">
    <text>In accordance with its dual activities, is able to complement both orn and cysQ mutants in E.coli.</text>
</comment>
<comment type="similarity">
    <text evidence="3">Belongs to the NrnA oligoribonuclease family.</text>
</comment>
<comment type="sequence caution" evidence="3">
    <conflict type="erroneous initiation">
        <sequence resource="EMBL-CDS" id="AAA88324"/>
    </conflict>
    <text>Truncated N-terminus.</text>
</comment>
<organism>
    <name type="scientific">Mycoplasma pneumoniae (strain ATCC 29342 / M129 / Subtype 1)</name>
    <name type="common">Mycoplasmoides pneumoniae</name>
    <dbReference type="NCBI Taxonomy" id="272634"/>
    <lineage>
        <taxon>Bacteria</taxon>
        <taxon>Bacillati</taxon>
        <taxon>Mycoplasmatota</taxon>
        <taxon>Mycoplasmoidales</taxon>
        <taxon>Mycoplasmoidaceae</taxon>
        <taxon>Mycoplasmoides</taxon>
    </lineage>
</organism>
<sequence length="324" mass="37145">MNSQVHRKGSIAEAVSAIQAHDKIVIFHHIRPDGDCLGAQHGLARLIQTNFPHKQVFCVGDPKHNFPWLEMVFTPKEQITPELMQQALAVIVDANYKERIECRDLLDQNQFKAVLRIDHHPNEDDLNTTHNFVDASYIAAAEQVVDLAVQAKWKLSPPAATALYLGIYTDSNRFLYSNTSWRTLYLGSMLYRAQANIAKIHDELNHTSLKDIQFKQYVFKNFQTFQNVIYFVADKKFQKKLKVTPLECARVNILANIEQFHIWLFFIEEGKNHYRVEFRSNGINVREVALKYGGGGHIQASGAVLKSKRDIIRVVQDCQKQIAV</sequence>
<reference key="1">
    <citation type="journal article" date="1996" name="Nucleic Acids Res.">
        <title>Complete sequence analysis of the genome of the bacterium Mycoplasma pneumoniae.</title>
        <authorList>
            <person name="Himmelreich R."/>
            <person name="Hilbert H."/>
            <person name="Plagens H."/>
            <person name="Pirkl E."/>
            <person name="Li B.-C."/>
            <person name="Herrmann R."/>
        </authorList>
    </citation>
    <scope>NUCLEOTIDE SEQUENCE [LARGE SCALE GENOMIC DNA]</scope>
    <source>
        <strain>ATCC 29342 / M129 / Subtype 1</strain>
    </source>
</reference>
<reference key="2">
    <citation type="journal article" date="1988" name="Gene">
        <title>Analysis of the nucleotide sequence of the P1 operon of Mycoplasma pneumoniae.</title>
        <authorList>
            <person name="Inamine J.M."/>
            <person name="Loechel S."/>
            <person name="Hu P.C."/>
        </authorList>
    </citation>
    <scope>NUCLEOTIDE SEQUENCE [GENOMIC DNA] OF 69-324</scope>
    <source>
        <strain>ATCC 29342 / M129 / Subtype 1</strain>
    </source>
</reference>
<reference key="3">
    <citation type="journal article" date="2011" name="J. Biol. Chem.">
        <title>Role of RecJ-like protein with 5'-3' exonuclease activity in oligo(deoxy)nucleotide degradation.</title>
        <authorList>
            <person name="Wakamatsu T."/>
            <person name="Kim K."/>
            <person name="Uemura Y."/>
            <person name="Nakagawa N."/>
            <person name="Kuramitsu S."/>
            <person name="Masui R."/>
        </authorList>
    </citation>
    <scope>FUNCTION AS AN EXONUCLEASE</scope>
    <scope>FUNCTION AS A PAP PHOSPHATASE</scope>
    <scope>BIOPHYSICOCHEMICAL PROPERTIES</scope>
    <scope>COFACTOR</scope>
    <scope>SUBUNIT</scope>
    <source>
        <strain>ATCC 29342 / M129 / Subtype 1</strain>
    </source>
</reference>
<reference key="4">
    <citation type="journal article" date="2012" name="RNA">
        <title>Characterization of NrnA homologs from Mycobacterium tuberculosis and Mycoplasma pneumoniae.</title>
        <authorList>
            <person name="Postic G."/>
            <person name="Danchin A."/>
            <person name="Mechold U."/>
        </authorList>
    </citation>
    <scope>FUNCTION AS AN OLIGORIBONUCLEASE</scope>
    <scope>FUNCTION AS A PAP PHOSPHATASE</scope>
    <scope>COFACTOR</scope>
    <scope>MUTAGENESIS OF 118-ASP--HIS-120</scope>
    <source>
        <strain>ATCC 29342 / M129 / Subtype 1</strain>
    </source>
</reference>
<dbReference type="EC" id="3.1.-.-"/>
<dbReference type="EC" id="3.1.3.7"/>
<dbReference type="EMBL" id="U00089">
    <property type="protein sequence ID" value="AAB95662.1"/>
    <property type="molecule type" value="Genomic_DNA"/>
</dbReference>
<dbReference type="EMBL" id="M21519">
    <property type="protein sequence ID" value="AAA88324.1"/>
    <property type="status" value="ALT_INIT"/>
    <property type="molecule type" value="Genomic_DNA"/>
</dbReference>
<dbReference type="PIR" id="S73340">
    <property type="entry name" value="S73340"/>
</dbReference>
<dbReference type="RefSeq" id="NP_109828.1">
    <property type="nucleotide sequence ID" value="NC_000912.1"/>
</dbReference>
<dbReference type="RefSeq" id="WP_010874497.1">
    <property type="nucleotide sequence ID" value="NZ_OU342337.1"/>
</dbReference>
<dbReference type="SMR" id="P75144"/>
<dbReference type="STRING" id="272634.MPN_140"/>
<dbReference type="EnsemblBacteria" id="AAB95662">
    <property type="protein sequence ID" value="AAB95662"/>
    <property type="gene ID" value="MPN_140"/>
</dbReference>
<dbReference type="KEGG" id="mpn:MPN_140"/>
<dbReference type="PATRIC" id="fig|272634.6.peg.154"/>
<dbReference type="HOGENOM" id="CLU_039720_1_0_14"/>
<dbReference type="OrthoDB" id="9803668at2"/>
<dbReference type="BioCyc" id="MPNE272634:G1GJ3-235-MONOMER"/>
<dbReference type="SABIO-RK" id="P75144"/>
<dbReference type="Proteomes" id="UP000000808">
    <property type="component" value="Chromosome"/>
</dbReference>
<dbReference type="GO" id="GO:0008441">
    <property type="term" value="F:3'(2'),5'-bisphosphate nucleotidase activity"/>
    <property type="evidence" value="ECO:0007669"/>
    <property type="project" value="UniProtKB-EC"/>
</dbReference>
<dbReference type="GO" id="GO:0004527">
    <property type="term" value="F:exonuclease activity"/>
    <property type="evidence" value="ECO:0007669"/>
    <property type="project" value="UniProtKB-KW"/>
</dbReference>
<dbReference type="GO" id="GO:0003676">
    <property type="term" value="F:nucleic acid binding"/>
    <property type="evidence" value="ECO:0007669"/>
    <property type="project" value="InterPro"/>
</dbReference>
<dbReference type="Gene3D" id="3.10.310.30">
    <property type="match status" value="1"/>
</dbReference>
<dbReference type="Gene3D" id="3.90.1640.10">
    <property type="entry name" value="inorganic pyrophosphatase (n-terminal core)"/>
    <property type="match status" value="1"/>
</dbReference>
<dbReference type="InterPro" id="IPR001667">
    <property type="entry name" value="DDH_dom"/>
</dbReference>
<dbReference type="InterPro" id="IPR038763">
    <property type="entry name" value="DHH_sf"/>
</dbReference>
<dbReference type="InterPro" id="IPR003156">
    <property type="entry name" value="DHHA1_dom"/>
</dbReference>
<dbReference type="InterPro" id="IPR051319">
    <property type="entry name" value="Oligoribo/pAp-PDE_c-di-AMP_PDE"/>
</dbReference>
<dbReference type="PANTHER" id="PTHR47618">
    <property type="entry name" value="BIFUNCTIONAL OLIGORIBONUCLEASE AND PAP PHOSPHATASE NRNA"/>
    <property type="match status" value="1"/>
</dbReference>
<dbReference type="PANTHER" id="PTHR47618:SF1">
    <property type="entry name" value="BIFUNCTIONAL OLIGORIBONUCLEASE AND PAP PHOSPHATASE NRNA"/>
    <property type="match status" value="1"/>
</dbReference>
<dbReference type="Pfam" id="PF01368">
    <property type="entry name" value="DHH"/>
    <property type="match status" value="1"/>
</dbReference>
<dbReference type="Pfam" id="PF02272">
    <property type="entry name" value="DHHA1"/>
    <property type="match status" value="1"/>
</dbReference>
<dbReference type="SUPFAM" id="SSF64182">
    <property type="entry name" value="DHH phosphoesterases"/>
    <property type="match status" value="1"/>
</dbReference>
<evidence type="ECO:0000269" key="1">
    <source>
    </source>
</evidence>
<evidence type="ECO:0000269" key="2">
    <source>
    </source>
</evidence>
<evidence type="ECO:0000305" key="3"/>